<name>5HT1B_HUMAN</name>
<protein>
    <recommendedName>
        <fullName evidence="20">5-hydroxytryptamine receptor 1B</fullName>
        <shortName evidence="20">5-HT-1B</shortName>
        <shortName evidence="20">5-HT1B</shortName>
    </recommendedName>
    <alternativeName>
        <fullName evidence="21">S12</fullName>
    </alternativeName>
    <alternativeName>
        <fullName evidence="22">Serotonin 1D beta receptor</fullName>
        <shortName evidence="22">5-HT-1D-beta</shortName>
    </alternativeName>
    <alternativeName>
        <fullName>Serotonin receptor 1B</fullName>
    </alternativeName>
</protein>
<gene>
    <name evidence="25" type="primary">HTR1B</name>
    <name type="synonym">HTR1DB</name>
</gene>
<comment type="function">
    <text evidence="5 6 7 8 9 10 11 12 13 14 15 16 17 19 23 24">G-protein coupled receptor for 5-hydroxytryptamine (serotonin) (PubMed:10452531, PubMed:1315531, PubMed:1328844, PubMed:1348246, PubMed:1351684, PubMed:1559993, PubMed:1565658, PubMed:1610347, PubMed:23519210, PubMed:23519215, PubMed:29925951, PubMed:8218242). Also functions as a receptor for ergot alkaloid derivatives, various anxiolytic and antidepressant drugs and other psychoactive substances, such as lysergic acid diethylamide (LSD) (PubMed:23519210, PubMed:23519215, PubMed:29925951). Ligand binding causes a conformation change that triggers signaling via guanine nucleotide-binding proteins (G proteins) and modulates the activity of downstream effectors, such as adenylate cyclase (PubMed:10452531, PubMed:1315531, PubMed:1328844, PubMed:1348246, PubMed:1351684, PubMed:1559993, PubMed:1565658, PubMed:1610347, PubMed:23519210, PubMed:23519215, PubMed:29925951, PubMed:8218242). HTR1B is coupled to G(i)/G(o) G alpha proteins and mediates inhibitory neurotransmission by inhibiting adenylate cyclase activity (PubMed:29925951, PubMed:35610220). Arrestin family members inhibit signaling via G proteins and mediate activation of alternative signaling pathways (PubMed:29925951). Regulates the release of 5-hydroxytryptamine, dopamine and acetylcholine in the brain, and thereby affects neural activity, nociceptive processing, pain perception, mood and behavior (PubMed:18476671, PubMed:20945968). Besides, plays a role in vasoconstriction of cerebral arteries (PubMed:15853772).</text>
</comment>
<comment type="subunit">
    <text evidence="5">Homodimer (PubMed:10452531). Heterodimer with HTR1D (PubMed:10452531).</text>
</comment>
<comment type="interaction">
    <interactant intactId="EBI-1056863">
        <id>P28222</id>
    </interactant>
    <interactant intactId="EBI-77797">
        <id>P35609</id>
        <label>ACTN2</label>
    </interactant>
    <organismsDiffer>false</organismsDiffer>
    <experiments>3</experiments>
</comment>
<comment type="interaction">
    <interactant intactId="EBI-1056863">
        <id>P28222</id>
    </interactant>
    <interactant intactId="EBI-724076">
        <id>Q99750</id>
        <label>MDFI</label>
    </interactant>
    <organismsDiffer>false</organismsDiffer>
    <experiments>7</experiments>
</comment>
<comment type="subcellular location">
    <subcellularLocation>
        <location evidence="5 6 7 8 9 10 11 13 14 15">Cell membrane</location>
        <topology evidence="5 6 7 8 9 10 11 13 14 15">Multi-pass membrane protein</topology>
    </subcellularLocation>
</comment>
<comment type="tissue specificity">
    <text evidence="8 9 12">Detected in cerebral artery smooth muscle cells (at protein level). Detected in brain cortex, striatum, amygdala, medulla, hippocampus, caudate nucleus and putamen.</text>
</comment>
<comment type="domain">
    <text evidence="14">Ligands are bound in a hydrophobic pocket formed by the transmembrane helices.</text>
</comment>
<comment type="domain">
    <text evidence="14">A residue in the 7th transmembrane region (Thr-355 in human, 'Asn-351' in mouse and rat) is important for species-specific sensitivity to various agonists.</text>
</comment>
<comment type="PTM">
    <text evidence="19">Phosphorylated. Desensitization of the receptor may be mediated by its phosphorylation.</text>
</comment>
<comment type="PTM">
    <text evidence="19">Palmitoylated.</text>
</comment>
<comment type="similarity">
    <text evidence="3">Belongs to the G-protein coupled receptor 1 family.</text>
</comment>
<accession>P28222</accession>
<accession>Q4VAY7</accession>
<sequence length="390" mass="43568">MEEPGAQCAPPPPAGSETWVPQANLSSAPSQNCSAKDYIYQDSISLPWKVLLVMLLALITLATTLSNAFVIATVYRTRKLHTPANYLIASLAVTDLLVSILVMPISTMYTVTGRWTLGQVVCDFWLSSDITCCTASILHLCVIALDRYWAITDAVEYSAKRTPKRAAVMIALVWVFSISISLPPFFWRQAKAEEEVSECVVNTDHILYTVYSTVGAFYFPTLLLIALYGRIYVEARSRILKQTPNRTGKRLTRAQLITDSPGSTSSVTSINSRVPDVPSESGSPVYVNQVKVRVSDALLEKKKLMAARERKATKTLGIILGAFIVCWLPFFIISLVMPICKDACWFHLAIFDFFTWLGYLNSLINPIIYTMSNEDFKQAFHKLIRFKCTS</sequence>
<keyword id="KW-0002">3D-structure</keyword>
<keyword id="KW-0085">Behavior</keyword>
<keyword id="KW-1003">Cell membrane</keyword>
<keyword id="KW-1015">Disulfide bond</keyword>
<keyword id="KW-0297">G-protein coupled receptor</keyword>
<keyword id="KW-0325">Glycoprotein</keyword>
<keyword id="KW-0449">Lipoprotein</keyword>
<keyword id="KW-0472">Membrane</keyword>
<keyword id="KW-0564">Palmitate</keyword>
<keyword id="KW-0597">Phosphoprotein</keyword>
<keyword id="KW-1267">Proteomics identification</keyword>
<keyword id="KW-0675">Receptor</keyword>
<keyword id="KW-1185">Reference proteome</keyword>
<keyword id="KW-0807">Transducer</keyword>
<keyword id="KW-0812">Transmembrane</keyword>
<keyword id="KW-1133">Transmembrane helix</keyword>
<dbReference type="EMBL" id="M89478">
    <property type="status" value="NOT_ANNOTATED_CDS"/>
    <property type="molecule type" value="Genomic_DNA"/>
</dbReference>
<dbReference type="EMBL" id="D10995">
    <property type="protein sequence ID" value="BAA01763.1"/>
    <property type="molecule type" value="Genomic_DNA"/>
</dbReference>
<dbReference type="EMBL" id="M83180">
    <property type="protein sequence ID" value="AAA36029.1"/>
    <property type="molecule type" value="Genomic_DNA"/>
</dbReference>
<dbReference type="EMBL" id="L09732">
    <property type="protein sequence ID" value="AAA36030.1"/>
    <property type="molecule type" value="Genomic_DNA"/>
</dbReference>
<dbReference type="EMBL" id="M81590">
    <property type="protein sequence ID" value="AAA60316.1"/>
    <property type="molecule type" value="mRNA"/>
</dbReference>
<dbReference type="EMBL" id="M75128">
    <property type="protein sequence ID" value="AAA58675.1"/>
    <property type="molecule type" value="Genomic_DNA"/>
</dbReference>
<dbReference type="EMBL" id="AB041370">
    <property type="protein sequence ID" value="BAA94455.1"/>
    <property type="molecule type" value="Genomic_DNA"/>
</dbReference>
<dbReference type="EMBL" id="AY225227">
    <property type="protein sequence ID" value="AAO67712.1"/>
    <property type="molecule type" value="Genomic_DNA"/>
</dbReference>
<dbReference type="EMBL" id="AL049595">
    <property type="status" value="NOT_ANNOTATED_CDS"/>
    <property type="molecule type" value="Genomic_DNA"/>
</dbReference>
<dbReference type="EMBL" id="BC069065">
    <property type="protein sequence ID" value="AAH69065.1"/>
    <property type="molecule type" value="mRNA"/>
</dbReference>
<dbReference type="EMBL" id="BC096206">
    <property type="protein sequence ID" value="AAH96206.1"/>
    <property type="molecule type" value="mRNA"/>
</dbReference>
<dbReference type="EMBL" id="BC096207">
    <property type="protein sequence ID" value="AAH96207.1"/>
    <property type="molecule type" value="mRNA"/>
</dbReference>
<dbReference type="EMBL" id="BC096208">
    <property type="protein sequence ID" value="AAH96208.1"/>
    <property type="molecule type" value="mRNA"/>
</dbReference>
<dbReference type="CCDS" id="CCDS4986.1"/>
<dbReference type="PIR" id="JN0268">
    <property type="entry name" value="JN0268"/>
</dbReference>
<dbReference type="RefSeq" id="NP_000854.1">
    <property type="nucleotide sequence ID" value="NM_000863.3"/>
</dbReference>
<dbReference type="PDB" id="4IAQ">
    <property type="method" value="X-ray"/>
    <property type="resolution" value="2.80 A"/>
    <property type="chains" value="A=33-239, A=304-390"/>
</dbReference>
<dbReference type="PDB" id="4IAR">
    <property type="method" value="X-ray"/>
    <property type="resolution" value="2.70 A"/>
    <property type="chains" value="A=33-239, A=306-390"/>
</dbReference>
<dbReference type="PDB" id="5V54">
    <property type="method" value="X-ray"/>
    <property type="resolution" value="3.90 A"/>
    <property type="chains" value="A/B=37-390"/>
</dbReference>
<dbReference type="PDB" id="6G79">
    <property type="method" value="EM"/>
    <property type="resolution" value="3.78 A"/>
    <property type="chains" value="S=34-390"/>
</dbReference>
<dbReference type="PDB" id="7C61">
    <property type="method" value="X-ray"/>
    <property type="resolution" value="3.00 A"/>
    <property type="chains" value="A=33-239, A=306-390"/>
</dbReference>
<dbReference type="PDBsum" id="4IAQ"/>
<dbReference type="PDBsum" id="4IAR"/>
<dbReference type="PDBsum" id="5V54"/>
<dbReference type="PDBsum" id="6G79"/>
<dbReference type="PDBsum" id="7C61"/>
<dbReference type="EMDB" id="EMD-4358"/>
<dbReference type="SMR" id="P28222"/>
<dbReference type="BioGRID" id="109583">
    <property type="interactions" value="75"/>
</dbReference>
<dbReference type="CORUM" id="P28222"/>
<dbReference type="FunCoup" id="P28222">
    <property type="interactions" value="925"/>
</dbReference>
<dbReference type="IntAct" id="P28222">
    <property type="interactions" value="61"/>
</dbReference>
<dbReference type="STRING" id="9606.ENSP00000358963"/>
<dbReference type="BindingDB" id="P28222"/>
<dbReference type="ChEMBL" id="CHEMBL1898"/>
<dbReference type="DrugBank" id="DB00918">
    <property type="generic name" value="Almotriptan"/>
</dbReference>
<dbReference type="DrugBank" id="DB00321">
    <property type="generic name" value="Amitriptyline"/>
</dbReference>
<dbReference type="DrugBank" id="DB00543">
    <property type="generic name" value="Amoxapine"/>
</dbReference>
<dbReference type="DrugBank" id="DB00714">
    <property type="generic name" value="Apomorphine"/>
</dbReference>
<dbReference type="DrugBank" id="DB01238">
    <property type="generic name" value="Aripiprazole"/>
</dbReference>
<dbReference type="DrugBank" id="DB14185">
    <property type="generic name" value="Aripiprazole lauroxil"/>
</dbReference>
<dbReference type="DrugBank" id="DB06216">
    <property type="generic name" value="Asenapine"/>
</dbReference>
<dbReference type="DrugBank" id="DB08807">
    <property type="generic name" value="Bopindolol"/>
</dbReference>
<dbReference type="DrugBank" id="DB01200">
    <property type="generic name" value="Bromocriptine"/>
</dbReference>
<dbReference type="DrugBank" id="DB00248">
    <property type="generic name" value="Cabergoline"/>
</dbReference>
<dbReference type="DrugBank" id="DB01239">
    <property type="generic name" value="Chlorprothixene"/>
</dbReference>
<dbReference type="DrugBank" id="DB00363">
    <property type="generic name" value="Clozapine"/>
</dbReference>
<dbReference type="DrugBank" id="DB04884">
    <property type="generic name" value="Dapoxetine"/>
</dbReference>
<dbReference type="DrugBank" id="DB11273">
    <property type="generic name" value="Dihydroergocornine"/>
</dbReference>
<dbReference type="DrugBank" id="DB13345">
    <property type="generic name" value="Dihydroergocristine"/>
</dbReference>
<dbReference type="DrugBank" id="DB00320">
    <property type="generic name" value="Dihydroergotamine"/>
</dbReference>
<dbReference type="DrugBank" id="DB00216">
    <property type="generic name" value="Eletriptan"/>
</dbReference>
<dbReference type="DrugBank" id="DB12883">
    <property type="generic name" value="Eltoprazine"/>
</dbReference>
<dbReference type="DrugBank" id="DB01049">
    <property type="generic name" value="Ergoloid mesylate"/>
</dbReference>
<dbReference type="DrugBank" id="DB00696">
    <property type="generic name" value="Ergotamine"/>
</dbReference>
<dbReference type="DrugBank" id="DB00623">
    <property type="generic name" value="Fluphenazine"/>
</dbReference>
<dbReference type="DrugBank" id="DB00998">
    <property type="generic name" value="Frovatriptan"/>
</dbReference>
<dbReference type="DrugBank" id="DB12141">
    <property type="generic name" value="Gilteritinib"/>
</dbReference>
<dbReference type="DrugBank" id="DB01221">
    <property type="generic name" value="Ketamine"/>
</dbReference>
<dbReference type="DrugBank" id="DB12540">
    <property type="generic name" value="Lecozotan"/>
</dbReference>
<dbReference type="DrugBank" id="DB00589">
    <property type="generic name" value="Lisuride"/>
</dbReference>
<dbReference type="DrugBank" id="DB00408">
    <property type="generic name" value="Loxapine"/>
</dbReference>
<dbReference type="DrugBank" id="DB13520">
    <property type="generic name" value="Metergoline"/>
</dbReference>
<dbReference type="DrugBank" id="DB00247">
    <property type="generic name" value="Methysergide"/>
</dbReference>
<dbReference type="DrugBank" id="DB08804">
    <property type="generic name" value="Nandrolone decanoate"/>
</dbReference>
<dbReference type="DrugBank" id="DB00952">
    <property type="generic name" value="Naratriptan"/>
</dbReference>
<dbReference type="DrugBank" id="DB06096">
    <property type="generic name" value="NXN-188"/>
</dbReference>
<dbReference type="DrugBank" id="DB00334">
    <property type="generic name" value="Olanzapine"/>
</dbReference>
<dbReference type="DrugBank" id="DB00904">
    <property type="generic name" value="Ondansetron"/>
</dbReference>
<dbReference type="DrugBank" id="DB00935">
    <property type="generic name" value="Oxymetazoline"/>
</dbReference>
<dbReference type="DrugBank" id="DB00715">
    <property type="generic name" value="Paroxetine"/>
</dbReference>
<dbReference type="DrugBank" id="DB01359">
    <property type="generic name" value="Penbutolol"/>
</dbReference>
<dbReference type="DrugBank" id="DB01186">
    <property type="generic name" value="Pergolide"/>
</dbReference>
<dbReference type="DrugBank" id="DB00960">
    <property type="generic name" value="Pindolol"/>
</dbReference>
<dbReference type="DrugBank" id="DB06153">
    <property type="generic name" value="Pizotifen"/>
</dbReference>
<dbReference type="DrugBank" id="DB00571">
    <property type="generic name" value="Propranolol"/>
</dbReference>
<dbReference type="DrugBank" id="DB01224">
    <property type="generic name" value="Quetiapine"/>
</dbReference>
<dbReference type="DrugBank" id="DB00953">
    <property type="generic name" value="Rizatriptan"/>
</dbReference>
<dbReference type="DrugBank" id="DB17052">
    <property type="generic name" value="SB 224289"/>
</dbReference>
<dbReference type="DrugBank" id="DB08839">
    <property type="generic name" value="Serotonin"/>
</dbReference>
<dbReference type="DrugBank" id="DB09304">
    <property type="generic name" value="Setiptiline"/>
</dbReference>
<dbReference type="DrugBank" id="DB00669">
    <property type="generic name" value="Sumatriptan"/>
</dbReference>
<dbReference type="DrugBank" id="DB13025">
    <property type="generic name" value="Tiapride"/>
</dbReference>
<dbReference type="DrugBank" id="DB09068">
    <property type="generic name" value="Vortioxetine"/>
</dbReference>
<dbReference type="DrugBank" id="DB01392">
    <property type="generic name" value="Yohimbine"/>
</dbReference>
<dbReference type="DrugBank" id="DB00246">
    <property type="generic name" value="Ziprasidone"/>
</dbReference>
<dbReference type="DrugBank" id="DB00315">
    <property type="generic name" value="Zolmitriptan"/>
</dbReference>
<dbReference type="DrugCentral" id="P28222"/>
<dbReference type="GuidetoPHARMACOLOGY" id="2"/>
<dbReference type="TCDB" id="9.A.14.3.6">
    <property type="family name" value="the g-protein-coupled receptor (gpcr) family"/>
</dbReference>
<dbReference type="GlyCosmos" id="P28222">
    <property type="glycosylation" value="3 sites, 1 glycan"/>
</dbReference>
<dbReference type="GlyGen" id="P28222">
    <property type="glycosylation" value="3 sites, 1 O-linked glycan (1 site)"/>
</dbReference>
<dbReference type="iPTMnet" id="P28222"/>
<dbReference type="PhosphoSitePlus" id="P28222"/>
<dbReference type="BioMuta" id="HTR1B"/>
<dbReference type="DMDM" id="112821"/>
<dbReference type="MassIVE" id="P28222"/>
<dbReference type="PaxDb" id="9606-ENSP00000358963"/>
<dbReference type="PeptideAtlas" id="P28222"/>
<dbReference type="ProteomicsDB" id="54452"/>
<dbReference type="Antibodypedia" id="18374">
    <property type="antibodies" value="309 antibodies from 37 providers"/>
</dbReference>
<dbReference type="DNASU" id="3351"/>
<dbReference type="Ensembl" id="ENST00000369947.5">
    <property type="protein sequence ID" value="ENSP00000358963.3"/>
    <property type="gene ID" value="ENSG00000135312.7"/>
</dbReference>
<dbReference type="GeneID" id="3351"/>
<dbReference type="KEGG" id="hsa:3351"/>
<dbReference type="MANE-Select" id="ENST00000369947.5">
    <property type="protein sequence ID" value="ENSP00000358963.3"/>
    <property type="RefSeq nucleotide sequence ID" value="NM_000863.3"/>
    <property type="RefSeq protein sequence ID" value="NP_000854.1"/>
</dbReference>
<dbReference type="AGR" id="HGNC:5287"/>
<dbReference type="CTD" id="3351"/>
<dbReference type="DisGeNET" id="3351"/>
<dbReference type="GeneCards" id="HTR1B"/>
<dbReference type="HGNC" id="HGNC:5287">
    <property type="gene designation" value="HTR1B"/>
</dbReference>
<dbReference type="HPA" id="ENSG00000135312">
    <property type="expression patterns" value="Tissue enhanced (brain, placenta, stomach)"/>
</dbReference>
<dbReference type="MIM" id="182131">
    <property type="type" value="gene"/>
</dbReference>
<dbReference type="neXtProt" id="NX_P28222"/>
<dbReference type="OpenTargets" id="ENSG00000135312"/>
<dbReference type="PharmGKB" id="PA29549"/>
<dbReference type="VEuPathDB" id="HostDB:ENSG00000135312"/>
<dbReference type="eggNOG" id="KOG3656">
    <property type="taxonomic scope" value="Eukaryota"/>
</dbReference>
<dbReference type="GeneTree" id="ENSGT01010000222287"/>
<dbReference type="HOGENOM" id="CLU_009579_11_1_1"/>
<dbReference type="InParanoid" id="P28222"/>
<dbReference type="OMA" id="LIRFRYC"/>
<dbReference type="OrthoDB" id="5956310at2759"/>
<dbReference type="PAN-GO" id="P28222">
    <property type="GO annotations" value="8 GO annotations based on evolutionary models"/>
</dbReference>
<dbReference type="PhylomeDB" id="P28222"/>
<dbReference type="TreeFam" id="TF316350"/>
<dbReference type="PathwayCommons" id="P28222"/>
<dbReference type="Reactome" id="R-HSA-390666">
    <property type="pathway name" value="Serotonin receptors"/>
</dbReference>
<dbReference type="Reactome" id="R-HSA-418594">
    <property type="pathway name" value="G alpha (i) signalling events"/>
</dbReference>
<dbReference type="SignaLink" id="P28222"/>
<dbReference type="SIGNOR" id="P28222"/>
<dbReference type="BioGRID-ORCS" id="3351">
    <property type="hits" value="15 hits in 1153 CRISPR screens"/>
</dbReference>
<dbReference type="EvolutionaryTrace" id="P28222"/>
<dbReference type="GeneWiki" id="5-HT1B_receptor"/>
<dbReference type="GenomeRNAi" id="3351"/>
<dbReference type="Pharos" id="P28222">
    <property type="development level" value="Tclin"/>
</dbReference>
<dbReference type="PRO" id="PR:P28222"/>
<dbReference type="Proteomes" id="UP000005640">
    <property type="component" value="Chromosome 6"/>
</dbReference>
<dbReference type="RNAct" id="P28222">
    <property type="molecule type" value="protein"/>
</dbReference>
<dbReference type="Bgee" id="ENSG00000135312">
    <property type="expression patterns" value="Expressed in popliteal artery and 92 other cell types or tissues"/>
</dbReference>
<dbReference type="ExpressionAtlas" id="P28222">
    <property type="expression patterns" value="baseline and differential"/>
</dbReference>
<dbReference type="GO" id="GO:0030425">
    <property type="term" value="C:dendrite"/>
    <property type="evidence" value="ECO:0000318"/>
    <property type="project" value="GO_Central"/>
</dbReference>
<dbReference type="GO" id="GO:0005783">
    <property type="term" value="C:endoplasmic reticulum"/>
    <property type="evidence" value="ECO:0000314"/>
    <property type="project" value="HPA"/>
</dbReference>
<dbReference type="GO" id="GO:0098666">
    <property type="term" value="C:G protein-coupled serotonin receptor complex"/>
    <property type="evidence" value="ECO:0007669"/>
    <property type="project" value="Ensembl"/>
</dbReference>
<dbReference type="GO" id="GO:0005886">
    <property type="term" value="C:plasma membrane"/>
    <property type="evidence" value="ECO:0000314"/>
    <property type="project" value="HPA"/>
</dbReference>
<dbReference type="GO" id="GO:0042734">
    <property type="term" value="C:presynaptic membrane"/>
    <property type="evidence" value="ECO:0007669"/>
    <property type="project" value="Ensembl"/>
</dbReference>
<dbReference type="GO" id="GO:0099154">
    <property type="term" value="C:serotonergic synapse"/>
    <property type="evidence" value="ECO:0007669"/>
    <property type="project" value="Ensembl"/>
</dbReference>
<dbReference type="GO" id="GO:0004993">
    <property type="term" value="F:G protein-coupled serotonin receptor activity"/>
    <property type="evidence" value="ECO:0000314"/>
    <property type="project" value="UniProtKB"/>
</dbReference>
<dbReference type="GO" id="GO:0001586">
    <property type="term" value="F:Gi/o-coupled serotonin receptor activity"/>
    <property type="evidence" value="ECO:0000314"/>
    <property type="project" value="UniProtKB"/>
</dbReference>
<dbReference type="GO" id="GO:0030594">
    <property type="term" value="F:neurotransmitter receptor activity"/>
    <property type="evidence" value="ECO:0000318"/>
    <property type="project" value="GO_Central"/>
</dbReference>
<dbReference type="GO" id="GO:0051378">
    <property type="term" value="F:serotonin binding"/>
    <property type="evidence" value="ECO:0007669"/>
    <property type="project" value="Ensembl"/>
</dbReference>
<dbReference type="GO" id="GO:0099589">
    <property type="term" value="F:serotonin receptor activity"/>
    <property type="evidence" value="ECO:0000315"/>
    <property type="project" value="UniProt"/>
</dbReference>
<dbReference type="GO" id="GO:0007193">
    <property type="term" value="P:adenylate cyclase-inhibiting G protein-coupled receptor signaling pathway"/>
    <property type="evidence" value="ECO:0000314"/>
    <property type="project" value="UniProtKB"/>
</dbReference>
<dbReference type="GO" id="GO:0007198">
    <property type="term" value="P:adenylate cyclase-inhibiting serotonin receptor signaling pathway"/>
    <property type="evidence" value="ECO:0000314"/>
    <property type="project" value="UniProtKB"/>
</dbReference>
<dbReference type="GO" id="GO:0046849">
    <property type="term" value="P:bone remodeling"/>
    <property type="evidence" value="ECO:0007669"/>
    <property type="project" value="Ensembl"/>
</dbReference>
<dbReference type="GO" id="GO:0071312">
    <property type="term" value="P:cellular response to alkaloid"/>
    <property type="evidence" value="ECO:0000314"/>
    <property type="project" value="UniProtKB"/>
</dbReference>
<dbReference type="GO" id="GO:0071466">
    <property type="term" value="P:cellular response to xenobiotic stimulus"/>
    <property type="evidence" value="ECO:0000314"/>
    <property type="project" value="UniProtKB"/>
</dbReference>
<dbReference type="GO" id="GO:0007268">
    <property type="term" value="P:chemical synaptic transmission"/>
    <property type="evidence" value="ECO:0000318"/>
    <property type="project" value="GO_Central"/>
</dbReference>
<dbReference type="GO" id="GO:0007187">
    <property type="term" value="P:G protein-coupled receptor signaling pathway, coupled to cyclic nucleotide second messenger"/>
    <property type="evidence" value="ECO:0000318"/>
    <property type="project" value="GO_Central"/>
</dbReference>
<dbReference type="GO" id="GO:0014063">
    <property type="term" value="P:negative regulation of serotonin secretion"/>
    <property type="evidence" value="ECO:0000250"/>
    <property type="project" value="UniProtKB"/>
</dbReference>
<dbReference type="GO" id="GO:0007208">
    <property type="term" value="P:phospholipase C-activating serotonin receptor signaling pathway"/>
    <property type="evidence" value="ECO:0007669"/>
    <property type="project" value="Ensembl"/>
</dbReference>
<dbReference type="GO" id="GO:1904707">
    <property type="term" value="P:positive regulation of vascular associated smooth muscle cell proliferation"/>
    <property type="evidence" value="ECO:0000315"/>
    <property type="project" value="BHF-UCL"/>
</dbReference>
<dbReference type="GO" id="GO:0050795">
    <property type="term" value="P:regulation of behavior"/>
    <property type="evidence" value="ECO:0007669"/>
    <property type="project" value="InterPro"/>
</dbReference>
<dbReference type="GO" id="GO:0042310">
    <property type="term" value="P:vasoconstriction"/>
    <property type="evidence" value="ECO:0007669"/>
    <property type="project" value="InterPro"/>
</dbReference>
<dbReference type="CDD" id="cd15333">
    <property type="entry name" value="7tmA_5-HT1B_1D"/>
    <property type="match status" value="1"/>
</dbReference>
<dbReference type="Gene3D" id="1.20.1070.10">
    <property type="entry name" value="Rhodopsin 7-helix transmembrane proteins"/>
    <property type="match status" value="1"/>
</dbReference>
<dbReference type="InterPro" id="IPR002147">
    <property type="entry name" value="5HT1B_rcpt"/>
</dbReference>
<dbReference type="InterPro" id="IPR002231">
    <property type="entry name" value="5HT_rcpt"/>
</dbReference>
<dbReference type="InterPro" id="IPR000276">
    <property type="entry name" value="GPCR_Rhodpsn"/>
</dbReference>
<dbReference type="InterPro" id="IPR017452">
    <property type="entry name" value="GPCR_Rhodpsn_7TM"/>
</dbReference>
<dbReference type="PANTHER" id="PTHR24248:SF201">
    <property type="entry name" value="5-HYDROXYTRYPTAMINE RECEPTOR 1B"/>
    <property type="match status" value="1"/>
</dbReference>
<dbReference type="PANTHER" id="PTHR24248">
    <property type="entry name" value="ADRENERGIC RECEPTOR-RELATED G-PROTEIN COUPLED RECEPTOR"/>
    <property type="match status" value="1"/>
</dbReference>
<dbReference type="Pfam" id="PF00001">
    <property type="entry name" value="7tm_1"/>
    <property type="match status" value="1"/>
</dbReference>
<dbReference type="PRINTS" id="PR00513">
    <property type="entry name" value="5HT1BRECEPTR"/>
</dbReference>
<dbReference type="PRINTS" id="PR01101">
    <property type="entry name" value="5HTRECEPTOR"/>
</dbReference>
<dbReference type="PRINTS" id="PR00237">
    <property type="entry name" value="GPCRRHODOPSN"/>
</dbReference>
<dbReference type="SMART" id="SM01381">
    <property type="entry name" value="7TM_GPCR_Srsx"/>
    <property type="match status" value="1"/>
</dbReference>
<dbReference type="SUPFAM" id="SSF81321">
    <property type="entry name" value="Family A G protein-coupled receptor-like"/>
    <property type="match status" value="1"/>
</dbReference>
<dbReference type="PROSITE" id="PS00237">
    <property type="entry name" value="G_PROTEIN_RECEP_F1_1"/>
    <property type="match status" value="1"/>
</dbReference>
<dbReference type="PROSITE" id="PS50262">
    <property type="entry name" value="G_PROTEIN_RECEP_F1_2"/>
    <property type="match status" value="1"/>
</dbReference>
<reference key="1">
    <citation type="journal article" date="1992" name="Biochem. Biophys. Res. Commun.">
        <title>Molecular cloning and functional characterization of a human 5-HT1B serotonin receptor: a homologue of the rat 5-HT1B receptor with 5-HT1D-like pharmacological specificity.</title>
        <authorList>
            <person name="Hamblin M.W."/>
            <person name="Metcalf M.A."/>
            <person name="McGuffin R.W."/>
            <person name="Karpells S."/>
        </authorList>
    </citation>
    <scope>NUCLEOTIDE SEQUENCE [GENOMIC DNA]</scope>
    <scope>FUNCTION</scope>
    <scope>SUBCELLULAR LOCATION</scope>
</reference>
<reference key="2">
    <citation type="journal article" date="1992" name="Biochem. Biophys. Res. Commun.">
        <title>Cloning and expression of the human 5-HT1B-type receptor gene.</title>
        <authorList>
            <person name="Mochizuki D."/>
            <person name="Yuyama Y."/>
            <person name="Tsujita R."/>
            <person name="Komaki H."/>
            <person name="Sagai H."/>
        </authorList>
    </citation>
    <scope>NUCLEOTIDE SEQUENCE [GENOMIC DNA]</scope>
    <scope>FUNCTION</scope>
    <scope>SUBCELLULAR LOCATION</scope>
</reference>
<reference key="3">
    <citation type="journal article" date="1992" name="J. Biol. Chem.">
        <title>Characterization of the human 5-hydroxytryptamine1B receptor.</title>
        <authorList>
            <person name="Jin H."/>
            <person name="Oksenberg D."/>
            <person name="Ashkenazi A."/>
            <person name="Peroutka S.J."/>
            <person name="Duncan A.M.V."/>
            <person name="Rozmahel R."/>
            <person name="Yang Y."/>
            <person name="Mengod G."/>
            <person name="Palacios J.M."/>
            <person name="O'Dowd B.F."/>
        </authorList>
    </citation>
    <scope>NUCLEOTIDE SEQUENCE [GENOMIC DNA]</scope>
    <scope>FUNCTION</scope>
    <scope>SUBCELLULAR LOCATION</scope>
    <scope>TISSUE SPECIFICITY</scope>
</reference>
<reference key="4">
    <citation type="journal article" date="1992" name="J. Biol. Chem.">
        <title>Molecular cloning of a human serotonin receptor (S12) with a pharmacological profile resembling that of the 5-HT1D subtype.</title>
        <authorList>
            <person name="Levy F.O."/>
            <person name="Gudermann T."/>
            <person name="Perez-Reyes E."/>
            <person name="Birnbaumer M."/>
            <person name="Kaumann A.J."/>
            <person name="Birnbaumer L."/>
        </authorList>
    </citation>
    <scope>NUCLEOTIDE SEQUENCE [GENOMIC DNA]</scope>
    <scope>FUNCTION</scope>
    <scope>SUBCELLULAR LOCATION</scope>
</reference>
<reference key="5">
    <citation type="journal article" date="1992" name="Proc. Natl. Acad. Sci. U.S.A.">
        <title>Human serotonin 1D receptor is encoded by a subfamily of two distinct genes: 5-HT1D alpha and 5-HT1D beta.</title>
        <authorList>
            <person name="Weinshank R.L."/>
            <person name="Zgombick J.M."/>
            <person name="Macchi M.J."/>
            <person name="Branchek T.A."/>
            <person name="Hartig P.R."/>
        </authorList>
    </citation>
    <scope>NUCLEOTIDE SEQUENCE [MRNA]</scope>
    <scope>FUNCTION</scope>
    <scope>SUBCELLULAR LOCATION</scope>
    <source>
        <tissue>Placenta</tissue>
    </source>
</reference>
<reference key="6">
    <citation type="journal article" date="1992" name="Proc. Natl. Acad. Sci. U.S.A.">
        <title>A human serotonin 1D receptor variant (5HT1D beta) encoded by an intronless gene on chromosome 6.</title>
        <authorList>
            <person name="Demchyshyn L."/>
            <person name="Sunahara R.K."/>
            <person name="Miller K."/>
            <person name="Teitler M."/>
            <person name="Hoffman B.J."/>
            <person name="Kennedy J.L."/>
            <person name="Seeman P."/>
            <person name="van Tol H.H.M."/>
            <person name="Niznik H.B."/>
        </authorList>
    </citation>
    <scope>NUCLEOTIDE SEQUENCE [GENOMIC DNA]</scope>
    <scope>FUNCTION</scope>
    <scope>SUBCELLULAR LOCATION</scope>
    <scope>TISSUE SPECIFICITY</scope>
</reference>
<reference key="7">
    <citation type="journal article" date="1992" name="Mol. Pharmacol.">
        <title>Cloning and pharmacological characterization of a novel human 5-hydroxytryptamine1D receptor subtype.</title>
        <authorList>
            <person name="Veldman S.A."/>
            <person name="Bienkowski M.J."/>
        </authorList>
    </citation>
    <scope>NUCLEOTIDE SEQUENCE [GENOMIC DNA]</scope>
    <scope>FUNCTION</scope>
    <scope>SUBCELLULAR LOCATION</scope>
</reference>
<reference key="8">
    <citation type="journal article" date="2004" name="Mol. Biol. Evol.">
        <title>Human-specific amino acid changes found in 103 protein-coding genes.</title>
        <authorList>
            <person name="Kitano T."/>
            <person name="Liu Y.-H."/>
            <person name="Ueda S."/>
            <person name="Saitou N."/>
        </authorList>
    </citation>
    <scope>NUCLEOTIDE SEQUENCE [GENOMIC DNA]</scope>
</reference>
<reference key="9">
    <citation type="submission" date="2003-01" db="EMBL/GenBank/DDBJ databases">
        <title>Isolation of complete coding sequence for 5-hydroxytryptamine (serotonin) receptor 1B (HTR1B).</title>
        <authorList>
            <person name="Kopatz S.A."/>
            <person name="Aronstam R.S."/>
            <person name="Sharma S.V."/>
        </authorList>
    </citation>
    <scope>NUCLEOTIDE SEQUENCE [GENOMIC DNA]</scope>
</reference>
<reference key="10">
    <citation type="journal article" date="2003" name="Nature">
        <title>The DNA sequence and analysis of human chromosome 6.</title>
        <authorList>
            <person name="Mungall A.J."/>
            <person name="Palmer S.A."/>
            <person name="Sims S.K."/>
            <person name="Edwards C.A."/>
            <person name="Ashurst J.L."/>
            <person name="Wilming L."/>
            <person name="Jones M.C."/>
            <person name="Horton R."/>
            <person name="Hunt S.E."/>
            <person name="Scott C.E."/>
            <person name="Gilbert J.G.R."/>
            <person name="Clamp M.E."/>
            <person name="Bethel G."/>
            <person name="Milne S."/>
            <person name="Ainscough R."/>
            <person name="Almeida J.P."/>
            <person name="Ambrose K.D."/>
            <person name="Andrews T.D."/>
            <person name="Ashwell R.I.S."/>
            <person name="Babbage A.K."/>
            <person name="Bagguley C.L."/>
            <person name="Bailey J."/>
            <person name="Banerjee R."/>
            <person name="Barker D.J."/>
            <person name="Barlow K.F."/>
            <person name="Bates K."/>
            <person name="Beare D.M."/>
            <person name="Beasley H."/>
            <person name="Beasley O."/>
            <person name="Bird C.P."/>
            <person name="Blakey S.E."/>
            <person name="Bray-Allen S."/>
            <person name="Brook J."/>
            <person name="Brown A.J."/>
            <person name="Brown J.Y."/>
            <person name="Burford D.C."/>
            <person name="Burrill W."/>
            <person name="Burton J."/>
            <person name="Carder C."/>
            <person name="Carter N.P."/>
            <person name="Chapman J.C."/>
            <person name="Clark S.Y."/>
            <person name="Clark G."/>
            <person name="Clee C.M."/>
            <person name="Clegg S."/>
            <person name="Cobley V."/>
            <person name="Collier R.E."/>
            <person name="Collins J.E."/>
            <person name="Colman L.K."/>
            <person name="Corby N.R."/>
            <person name="Coville G.J."/>
            <person name="Culley K.M."/>
            <person name="Dhami P."/>
            <person name="Davies J."/>
            <person name="Dunn M."/>
            <person name="Earthrowl M.E."/>
            <person name="Ellington A.E."/>
            <person name="Evans K.A."/>
            <person name="Faulkner L."/>
            <person name="Francis M.D."/>
            <person name="Frankish A."/>
            <person name="Frankland J."/>
            <person name="French L."/>
            <person name="Garner P."/>
            <person name="Garnett J."/>
            <person name="Ghori M.J."/>
            <person name="Gilby L.M."/>
            <person name="Gillson C.J."/>
            <person name="Glithero R.J."/>
            <person name="Grafham D.V."/>
            <person name="Grant M."/>
            <person name="Gribble S."/>
            <person name="Griffiths C."/>
            <person name="Griffiths M.N.D."/>
            <person name="Hall R."/>
            <person name="Halls K.S."/>
            <person name="Hammond S."/>
            <person name="Harley J.L."/>
            <person name="Hart E.A."/>
            <person name="Heath P.D."/>
            <person name="Heathcott R."/>
            <person name="Holmes S.J."/>
            <person name="Howden P.J."/>
            <person name="Howe K.L."/>
            <person name="Howell G.R."/>
            <person name="Huckle E."/>
            <person name="Humphray S.J."/>
            <person name="Humphries M.D."/>
            <person name="Hunt A.R."/>
            <person name="Johnson C.M."/>
            <person name="Joy A.A."/>
            <person name="Kay M."/>
            <person name="Keenan S.J."/>
            <person name="Kimberley A.M."/>
            <person name="King A."/>
            <person name="Laird G.K."/>
            <person name="Langford C."/>
            <person name="Lawlor S."/>
            <person name="Leongamornlert D.A."/>
            <person name="Leversha M."/>
            <person name="Lloyd C.R."/>
            <person name="Lloyd D.M."/>
            <person name="Loveland J.E."/>
            <person name="Lovell J."/>
            <person name="Martin S."/>
            <person name="Mashreghi-Mohammadi M."/>
            <person name="Maslen G.L."/>
            <person name="Matthews L."/>
            <person name="McCann O.T."/>
            <person name="McLaren S.J."/>
            <person name="McLay K."/>
            <person name="McMurray A."/>
            <person name="Moore M.J.F."/>
            <person name="Mullikin J.C."/>
            <person name="Niblett D."/>
            <person name="Nickerson T."/>
            <person name="Novik K.L."/>
            <person name="Oliver K."/>
            <person name="Overton-Larty E.K."/>
            <person name="Parker A."/>
            <person name="Patel R."/>
            <person name="Pearce A.V."/>
            <person name="Peck A.I."/>
            <person name="Phillimore B.J.C.T."/>
            <person name="Phillips S."/>
            <person name="Plumb R.W."/>
            <person name="Porter K.M."/>
            <person name="Ramsey Y."/>
            <person name="Ranby S.A."/>
            <person name="Rice C.M."/>
            <person name="Ross M.T."/>
            <person name="Searle S.M."/>
            <person name="Sehra H.K."/>
            <person name="Sheridan E."/>
            <person name="Skuce C.D."/>
            <person name="Smith S."/>
            <person name="Smith M."/>
            <person name="Spraggon L."/>
            <person name="Squares S.L."/>
            <person name="Steward C.A."/>
            <person name="Sycamore N."/>
            <person name="Tamlyn-Hall G."/>
            <person name="Tester J."/>
            <person name="Theaker A.J."/>
            <person name="Thomas D.W."/>
            <person name="Thorpe A."/>
            <person name="Tracey A."/>
            <person name="Tromans A."/>
            <person name="Tubby B."/>
            <person name="Wall M."/>
            <person name="Wallis J.M."/>
            <person name="West A.P."/>
            <person name="White S.S."/>
            <person name="Whitehead S.L."/>
            <person name="Whittaker H."/>
            <person name="Wild A."/>
            <person name="Willey D.J."/>
            <person name="Wilmer T.E."/>
            <person name="Wood J.M."/>
            <person name="Wray P.W."/>
            <person name="Wyatt J.C."/>
            <person name="Young L."/>
            <person name="Younger R.M."/>
            <person name="Bentley D.R."/>
            <person name="Coulson A."/>
            <person name="Durbin R.M."/>
            <person name="Hubbard T."/>
            <person name="Sulston J.E."/>
            <person name="Dunham I."/>
            <person name="Rogers J."/>
            <person name="Beck S."/>
        </authorList>
    </citation>
    <scope>NUCLEOTIDE SEQUENCE [LARGE SCALE GENOMIC DNA]</scope>
</reference>
<reference key="11">
    <citation type="journal article" date="2004" name="Genome Res.">
        <title>The status, quality, and expansion of the NIH full-length cDNA project: the Mammalian Gene Collection (MGC).</title>
        <authorList>
            <consortium name="The MGC Project Team"/>
        </authorList>
    </citation>
    <scope>NUCLEOTIDE SEQUENCE [LARGE SCALE MRNA]</scope>
</reference>
<reference key="12">
    <citation type="journal article" date="1993" name="Biochemistry">
        <title>Human serotonin1B receptor expression in Sf9 cells: phosphorylation, palmitoylation, and adenylyl cyclase inhibition.</title>
        <authorList>
            <person name="Ng G.Y.K."/>
            <person name="George S.R."/>
            <person name="Zastawny R.L."/>
            <person name="Caron M."/>
            <person name="Bouvier M."/>
            <person name="Dennis M."/>
            <person name="O'Dowd B.F."/>
        </authorList>
    </citation>
    <scope>PALMITOYLATION</scope>
    <scope>PHOSPHORYLATION</scope>
    <scope>FUNCTION</scope>
</reference>
<reference key="13">
    <citation type="journal article" date="1999" name="FEBS Lett.">
        <title>Serotonin 5-HT1B and 5-HT1D receptors form homodimers when expressed alone and heterodimers when co-expressed.</title>
        <authorList>
            <person name="Xie Z."/>
            <person name="Lee S.P."/>
            <person name="O'Dowd B.F."/>
            <person name="George S.R."/>
        </authorList>
    </citation>
    <scope>FUNCTION</scope>
    <scope>SUBUNIT</scope>
    <scope>SUBCELLULAR LOCATION</scope>
</reference>
<reference key="14">
    <citation type="journal article" date="2005" name="Clin. Sci.">
        <title>Triptan-induced contractile (5-HT1B receptor) responses in human cerebral and coronary arteries: relationship to clinical effect.</title>
        <authorList>
            <person name="Edvinsson L."/>
            <person name="Uddman E."/>
            <person name="Wackenfors A."/>
            <person name="Davenport A."/>
            <person name="Longmore J."/>
            <person name="Malmsjo M."/>
        </authorList>
    </citation>
    <scope>FUNCTION</scope>
    <scope>TISSUE SPECIFICITY</scope>
</reference>
<reference key="15">
    <citation type="journal article" date="2008" name="Chem. Rev.">
        <title>Serotonin receptors.</title>
        <authorList>
            <person name="Nichols D.E."/>
            <person name="Nichols C.D."/>
        </authorList>
    </citation>
    <scope>REVIEW</scope>
</reference>
<reference key="16">
    <citation type="journal article" date="2011" name="Physiol. Res.">
        <title>Serotonin receptors - from molecular biology to clinical applications.</title>
        <authorList>
            <person name="Pytliak M."/>
            <person name="Vargova V."/>
            <person name="Mechirova V."/>
            <person name="Felsoci M."/>
        </authorList>
    </citation>
    <scope>REVIEW</scope>
</reference>
<reference key="17">
    <citation type="journal article" date="2013" name="Science">
        <title>Structural features for functional selectivity at serotonin receptors.</title>
        <authorList>
            <person name="Wacker D."/>
            <person name="Wang C."/>
            <person name="Katritch V."/>
            <person name="Han G.W."/>
            <person name="Huang X.P."/>
            <person name="Vardy E."/>
            <person name="McCorvy J.D."/>
            <person name="Jiang Y."/>
            <person name="Chu M."/>
            <person name="Siu F.Y."/>
            <person name="Liu W."/>
            <person name="Xu H.E."/>
            <person name="Cherezov V."/>
            <person name="Roth B.L."/>
            <person name="Stevens R.C."/>
        </authorList>
    </citation>
    <scope>FUNCTION</scope>
    <scope>SUBCELLULAR LOCATION</scope>
</reference>
<reference key="18">
    <citation type="journal article" date="2022" name="Cell Discov.">
        <title>Structural insights into the ligand binding and Gi coupling of serotonin receptor 5-HT5A.</title>
        <authorList>
            <person name="Tan Y."/>
            <person name="Xu P."/>
            <person name="Huang S."/>
            <person name="Yang G."/>
            <person name="Zhou F."/>
            <person name="He X."/>
            <person name="Ma H."/>
            <person name="Xu H.E."/>
            <person name="Jiang Y."/>
        </authorList>
    </citation>
    <scope>FUNCTION</scope>
    <scope>MUTAGENESIS OF SER-334</scope>
</reference>
<reference evidence="26 27" key="19">
    <citation type="journal article" date="2013" name="Science">
        <title>Structural basis for molecular recognition at serotonin receptors.</title>
        <authorList>
            <person name="Wang C."/>
            <person name="Jiang Y."/>
            <person name="Ma J."/>
            <person name="Wu H."/>
            <person name="Wacker D."/>
            <person name="Katritch V."/>
            <person name="Han G.W."/>
            <person name="Liu W."/>
            <person name="Huang X.P."/>
            <person name="Vardy E."/>
            <person name="McCorvy J.D."/>
            <person name="Gao X."/>
            <person name="Zhou X.E."/>
            <person name="Melcher K."/>
            <person name="Zhang C."/>
            <person name="Bai F."/>
            <person name="Yang H."/>
            <person name="Yang L."/>
            <person name="Jiang H."/>
            <person name="Roth B.L."/>
            <person name="Cherezov V."/>
            <person name="Stevens R.C."/>
            <person name="Xu H.E."/>
        </authorList>
    </citation>
    <scope>X-RAY CRYSTALLOGRAPHY (2.7 ANGSTROMS) OF 33-239 AND 306-390 IN COMPLEXES WITH ERGOTAMINE AND DIHYDROERGOTAMINE</scope>
    <scope>FUNCTION</scope>
    <scope>SUBCELLULAR LOCATION</scope>
    <scope>MEMBRANE TOPOLOGY</scope>
    <scope>DOMAIN</scope>
    <scope>DISULFIDE BOND</scope>
    <scope>MUTAGENESIS OF LEU-126; ASP-129; ILE-130; CYS-133; THR-134; VAL-200; VAL-201; THR-203; THR-209; SER-212; ALA-216; TRP-327; PHE-330; PHE-331; SER-334; MET-337; PHE-351; ASP-352; THR-355 AND TYR-359</scope>
</reference>
<reference evidence="28" key="20">
    <citation type="journal article" date="2018" name="Nature">
        <title>Cryo-EM structure of the serotonin 5-HT1B receptor coupled to heterotrimeric Go.</title>
        <authorList>
            <person name="Garcia-Nafria J."/>
            <person name="Nehme R."/>
            <person name="Edwards P.C."/>
            <person name="Tate C.G."/>
        </authorList>
    </citation>
    <scope>STRUCTURE BY ELECTRON MICROSCOPY (3.78 ANGSTROMS) OF 34-390 IN COMPLEX WITH GNAO1; GNB1 AND GNG2</scope>
    <scope>FUNCTION</scope>
</reference>
<reference key="21">
    <citation type="journal article" date="1994" name="Biochem. Biophys. Res. Commun.">
        <title>Identification of genetic variation in the human serotonin 1D beta receptor gene.</title>
        <authorList>
            <person name="Nothen M.M."/>
            <person name="Erdmann J."/>
            <person name="Shimron-Abarbanell D."/>
            <person name="Propping P."/>
        </authorList>
    </citation>
    <scope>VARIANT CYS-124</scope>
</reference>
<organism>
    <name type="scientific">Homo sapiens</name>
    <name type="common">Human</name>
    <dbReference type="NCBI Taxonomy" id="9606"/>
    <lineage>
        <taxon>Eukaryota</taxon>
        <taxon>Metazoa</taxon>
        <taxon>Chordata</taxon>
        <taxon>Craniata</taxon>
        <taxon>Vertebrata</taxon>
        <taxon>Euteleostomi</taxon>
        <taxon>Mammalia</taxon>
        <taxon>Eutheria</taxon>
        <taxon>Euarchontoglires</taxon>
        <taxon>Primates</taxon>
        <taxon>Haplorrhini</taxon>
        <taxon>Catarrhini</taxon>
        <taxon>Hominidae</taxon>
        <taxon>Homo</taxon>
    </lineage>
</organism>
<feature type="chain" id="PRO_0000068916" description="5-hydroxytryptamine receptor 1B">
    <location>
        <begin position="1"/>
        <end position="390"/>
    </location>
</feature>
<feature type="topological domain" description="Extracellular" evidence="16 28">
    <location>
        <begin position="1"/>
        <end position="46"/>
    </location>
</feature>
<feature type="transmembrane region" description="Helical; Name=1" evidence="16 28">
    <location>
        <begin position="47"/>
        <end position="72"/>
    </location>
</feature>
<feature type="topological domain" description="Cytoplasmic" evidence="16 28">
    <location>
        <begin position="73"/>
        <end position="86"/>
    </location>
</feature>
<feature type="transmembrane region" description="Helical; Name=2" evidence="16 28">
    <location>
        <begin position="87"/>
        <end position="111"/>
    </location>
</feature>
<feature type="topological domain" description="Extracellular" evidence="16 28">
    <location>
        <begin position="112"/>
        <end position="119"/>
    </location>
</feature>
<feature type="transmembrane region" description="Helical; Name=3" evidence="16 28">
    <location>
        <begin position="120"/>
        <end position="145"/>
    </location>
</feature>
<feature type="topological domain" description="Cytoplasmic" evidence="16 28">
    <location>
        <begin position="146"/>
        <end position="165"/>
    </location>
</feature>
<feature type="transmembrane region" description="Helical; Name=4" evidence="16 28">
    <location>
        <begin position="166"/>
        <end position="184"/>
    </location>
</feature>
<feature type="topological domain" description="Extracellular" evidence="16 28">
    <location>
        <begin position="185"/>
        <end position="205"/>
    </location>
</feature>
<feature type="transmembrane region" description="Helical; Name=5" evidence="16 28">
    <location>
        <begin position="206"/>
        <end position="229"/>
    </location>
</feature>
<feature type="topological domain" description="Cytoplasmic" evidence="16 28">
    <location>
        <begin position="230"/>
        <end position="315"/>
    </location>
</feature>
<feature type="transmembrane region" description="Helical; Name=6" evidence="16 28">
    <location>
        <begin position="316"/>
        <end position="337"/>
    </location>
</feature>
<feature type="topological domain" description="Extracellular" evidence="16 28">
    <location>
        <begin position="338"/>
        <end position="347"/>
    </location>
</feature>
<feature type="transmembrane region" description="Helical; Name=7" evidence="16 28">
    <location>
        <begin position="348"/>
        <end position="370"/>
    </location>
</feature>
<feature type="topological domain" description="Cytoplasmic" evidence="16 28">
    <location>
        <begin position="371"/>
        <end position="390"/>
    </location>
</feature>
<feature type="region of interest" description="Disordered" evidence="4">
    <location>
        <begin position="259"/>
        <end position="281"/>
    </location>
</feature>
<feature type="short sequence motif" description="DRY motif; important for ligand-induced conformation changes and signaling" evidence="1">
    <location>
        <begin position="146"/>
        <end position="148"/>
    </location>
</feature>
<feature type="short sequence motif" description="NPxxY motif; important for ligand-induced conformation changes and signaling" evidence="1">
    <location>
        <begin position="365"/>
        <end position="369"/>
    </location>
</feature>
<feature type="compositionally biased region" description="Polar residues" evidence="4">
    <location>
        <begin position="259"/>
        <end position="272"/>
    </location>
</feature>
<feature type="binding site" evidence="14 27">
    <location>
        <position position="129"/>
    </location>
    <ligand>
        <name>ergotamine</name>
        <dbReference type="ChEBI" id="CHEBI:190463"/>
        <note>agonist</note>
    </ligand>
</feature>
<feature type="binding site" evidence="14 27">
    <location>
        <position position="134"/>
    </location>
    <ligand>
        <name>ergotamine</name>
        <dbReference type="ChEBI" id="CHEBI:190463"/>
        <note>agonist</note>
    </ligand>
</feature>
<feature type="binding site" evidence="14 27">
    <location>
        <position position="201"/>
    </location>
    <ligand>
        <name>ergotamine</name>
        <dbReference type="ChEBI" id="CHEBI:190463"/>
        <note>agonist</note>
    </ligand>
</feature>
<feature type="site" description="Important for species-specific agonist sensitivity" evidence="14">
    <location>
        <position position="355"/>
    </location>
</feature>
<feature type="lipid moiety-binding region" description="S-palmitoyl cysteine" evidence="2">
    <location>
        <position position="388"/>
    </location>
</feature>
<feature type="glycosylation site" description="N-linked (GlcNAc...) asparagine" evidence="2">
    <location>
        <position position="24"/>
    </location>
</feature>
<feature type="glycosylation site" description="N-linked (GlcNAc...) asparagine" evidence="2">
    <location>
        <position position="32"/>
    </location>
</feature>
<feature type="disulfide bond" evidence="3 14 16 28">
    <location>
        <begin position="122"/>
        <end position="199"/>
    </location>
</feature>
<feature type="sequence variant" id="VAR_011715" description="In dbSNP:rs130060." evidence="18">
    <original>F</original>
    <variation>C</variation>
    <location>
        <position position="124"/>
    </location>
</feature>
<feature type="sequence variant" id="VAR_011831" description="In dbSNP:rs130061.">
    <original>F</original>
    <variation>L</variation>
    <location>
        <position position="219"/>
    </location>
</feature>
<feature type="sequence variant" id="VAR_011832" description="In dbSNP:rs130063.">
    <original>I</original>
    <variation>V</variation>
    <location>
        <position position="367"/>
    </location>
</feature>
<feature type="sequence variant" id="VAR_011833" description="In dbSNP:rs130064.">
    <original>E</original>
    <variation>K</variation>
    <location>
        <position position="374"/>
    </location>
</feature>
<feature type="mutagenesis site" description="No effect on agonist binding." evidence="14">
    <original>L</original>
    <variation>A</variation>
    <location>
        <position position="126"/>
    </location>
</feature>
<feature type="mutagenesis site" description="Abolishes agonist binding." evidence="14">
    <original>D</original>
    <variation>A</variation>
    <location>
        <position position="129"/>
    </location>
</feature>
<feature type="mutagenesis site" description="Abolishes agonist binding." evidence="14">
    <original>I</original>
    <variation>A</variation>
    <location>
        <position position="130"/>
    </location>
</feature>
<feature type="mutagenesis site" description="Abolishes agonist binding." evidence="14">
    <original>C</original>
    <variation>A</variation>
    <location>
        <position position="133"/>
    </location>
</feature>
<feature type="mutagenesis site" description="Slightly decreases agonist binding." evidence="14">
    <original>T</original>
    <variation>A</variation>
    <location>
        <position position="134"/>
    </location>
</feature>
<feature type="mutagenesis site" description="No effect on agonist binding." evidence="14">
    <original>V</original>
    <variation>A</variation>
    <location>
        <position position="200"/>
    </location>
</feature>
<feature type="mutagenesis site" description="No effect on agonist binding." evidence="14">
    <original>V</original>
    <variation>A</variation>
    <location>
        <position position="201"/>
    </location>
</feature>
<feature type="mutagenesis site" description="No effect on agonist binding." evidence="14">
    <original>T</original>
    <variation>A</variation>
    <location>
        <position position="203"/>
    </location>
</feature>
<feature type="mutagenesis site" description="No effect on agonist binding." evidence="14">
    <original>T</original>
    <variation>A</variation>
    <location>
        <position position="209"/>
    </location>
</feature>
<feature type="mutagenesis site" description="No effect on agonist binding." evidence="14">
    <original>S</original>
    <variation>A</variation>
    <location>
        <position position="212"/>
    </location>
</feature>
<feature type="mutagenesis site" description="No effect on agonist binding." evidence="14">
    <original>A</original>
    <variation>S</variation>
    <location>
        <position position="216"/>
    </location>
</feature>
<feature type="mutagenesis site" description="Abolishes agonist binding." evidence="14">
    <original>W</original>
    <variation>A</variation>
    <location>
        <position position="327"/>
    </location>
</feature>
<feature type="mutagenesis site" description="Abolishes agonist binding." evidence="14">
    <original>F</original>
    <variation>A</variation>
    <location>
        <position position="330"/>
    </location>
</feature>
<feature type="mutagenesis site" description="No effect on agonist binding." evidence="14">
    <original>F</original>
    <variation>A</variation>
    <location>
        <position position="331"/>
    </location>
</feature>
<feature type="mutagenesis site" description="No effect on agonist binding." evidence="14">
    <original>S</original>
    <variation>A</variation>
    <location>
        <position position="334"/>
    </location>
</feature>
<feature type="mutagenesis site" description="Reduced G(i)/(o)-coupled receptor activity." evidence="17">
    <original>S</original>
    <variation>E</variation>
    <location>
        <position position="334"/>
    </location>
</feature>
<feature type="mutagenesis site" description="No effect on agonist binding." evidence="14">
    <original>M</original>
    <variation>A</variation>
    <location>
        <position position="337"/>
    </location>
</feature>
<feature type="mutagenesis site" description="No effect on agonist binding." evidence="14">
    <original>F</original>
    <variation>A</variation>
    <location>
        <position position="351"/>
    </location>
</feature>
<feature type="mutagenesis site" description="No effect on agonist binding." evidence="14">
    <original>D</original>
    <variation>A</variation>
    <location>
        <position position="352"/>
    </location>
</feature>
<feature type="mutagenesis site" description="No effect on agonist binding." evidence="14">
    <original>T</original>
    <variation>A</variation>
    <location>
        <position position="355"/>
    </location>
</feature>
<feature type="mutagenesis site" description="No effect on agonist binding." evidence="14">
    <original>Y</original>
    <variation>A</variation>
    <location>
        <position position="359"/>
    </location>
</feature>
<feature type="helix" evidence="29">
    <location>
        <begin position="40"/>
        <end position="43"/>
    </location>
</feature>
<feature type="helix" evidence="29">
    <location>
        <begin position="46"/>
        <end position="76"/>
    </location>
</feature>
<feature type="helix" evidence="29">
    <location>
        <begin position="78"/>
        <end position="80"/>
    </location>
</feature>
<feature type="helix" evidence="29">
    <location>
        <begin position="83"/>
        <end position="101"/>
    </location>
</feature>
<feature type="helix" evidence="29">
    <location>
        <begin position="104"/>
        <end position="112"/>
    </location>
</feature>
<feature type="helix" evidence="29">
    <location>
        <begin position="118"/>
        <end position="152"/>
    </location>
</feature>
<feature type="helix" evidence="29">
    <location>
        <begin position="154"/>
        <end position="158"/>
    </location>
</feature>
<feature type="helix" evidence="29">
    <location>
        <begin position="163"/>
        <end position="181"/>
    </location>
</feature>
<feature type="helix" evidence="29">
    <location>
        <begin position="206"/>
        <end position="216"/>
    </location>
</feature>
<feature type="helix" evidence="29">
    <location>
        <begin position="218"/>
        <end position="239"/>
    </location>
</feature>
<feature type="helix" evidence="29">
    <location>
        <begin position="311"/>
        <end position="336"/>
    </location>
</feature>
<feature type="turn" evidence="30">
    <location>
        <begin position="337"/>
        <end position="339"/>
    </location>
</feature>
<feature type="helix" evidence="29">
    <location>
        <begin position="349"/>
        <end position="372"/>
    </location>
</feature>
<feature type="helix" evidence="29">
    <location>
        <begin position="374"/>
        <end position="383"/>
    </location>
</feature>
<proteinExistence type="evidence at protein level"/>
<evidence type="ECO:0000250" key="1">
    <source>
        <dbReference type="UniProtKB" id="P41595"/>
    </source>
</evidence>
<evidence type="ECO:0000255" key="2"/>
<evidence type="ECO:0000255" key="3">
    <source>
        <dbReference type="PROSITE-ProRule" id="PRU00521"/>
    </source>
</evidence>
<evidence type="ECO:0000256" key="4">
    <source>
        <dbReference type="SAM" id="MobiDB-lite"/>
    </source>
</evidence>
<evidence type="ECO:0000269" key="5">
    <source>
    </source>
</evidence>
<evidence type="ECO:0000269" key="6">
    <source>
    </source>
</evidence>
<evidence type="ECO:0000269" key="7">
    <source>
    </source>
</evidence>
<evidence type="ECO:0000269" key="8">
    <source>
    </source>
</evidence>
<evidence type="ECO:0000269" key="9">
    <source>
    </source>
</evidence>
<evidence type="ECO:0000269" key="10">
    <source>
    </source>
</evidence>
<evidence type="ECO:0000269" key="11">
    <source>
    </source>
</evidence>
<evidence type="ECO:0000269" key="12">
    <source>
    </source>
</evidence>
<evidence type="ECO:0000269" key="13">
    <source>
    </source>
</evidence>
<evidence type="ECO:0000269" key="14">
    <source>
    </source>
</evidence>
<evidence type="ECO:0000269" key="15">
    <source>
    </source>
</evidence>
<evidence type="ECO:0000269" key="16">
    <source>
    </source>
</evidence>
<evidence type="ECO:0000269" key="17">
    <source>
    </source>
</evidence>
<evidence type="ECO:0000269" key="18">
    <source>
    </source>
</evidence>
<evidence type="ECO:0000269" key="19">
    <source>
    </source>
</evidence>
<evidence type="ECO:0000303" key="20">
    <source>
    </source>
</evidence>
<evidence type="ECO:0000303" key="21">
    <source>
    </source>
</evidence>
<evidence type="ECO:0000303" key="22">
    <source>
    </source>
</evidence>
<evidence type="ECO:0000303" key="23">
    <source>
    </source>
</evidence>
<evidence type="ECO:0000303" key="24">
    <source>
    </source>
</evidence>
<evidence type="ECO:0000312" key="25">
    <source>
        <dbReference type="HGNC" id="HGNC:5287"/>
    </source>
</evidence>
<evidence type="ECO:0007744" key="26">
    <source>
        <dbReference type="PDB" id="4IAQ"/>
    </source>
</evidence>
<evidence type="ECO:0007744" key="27">
    <source>
        <dbReference type="PDB" id="4IAR"/>
    </source>
</evidence>
<evidence type="ECO:0007744" key="28">
    <source>
        <dbReference type="PDB" id="6G79"/>
    </source>
</evidence>
<evidence type="ECO:0007829" key="29">
    <source>
        <dbReference type="PDB" id="4IAR"/>
    </source>
</evidence>
<evidence type="ECO:0007829" key="30">
    <source>
        <dbReference type="PDB" id="7C61"/>
    </source>
</evidence>